<keyword id="KW-0028">Amino-acid biosynthesis</keyword>
<keyword id="KW-0057">Aromatic amino acid biosynthesis</keyword>
<keyword id="KW-0274">FAD</keyword>
<keyword id="KW-0285">Flavoprotein</keyword>
<keyword id="KW-0288">FMN</keyword>
<keyword id="KW-0456">Lyase</keyword>
<keyword id="KW-0521">NADP</keyword>
<protein>
    <recommendedName>
        <fullName evidence="1">Chorismate synthase</fullName>
        <shortName evidence="1">CS</shortName>
        <ecNumber evidence="1">4.2.3.5</ecNumber>
    </recommendedName>
    <alternativeName>
        <fullName evidence="1">5-enolpyruvylshikimate-3-phosphate phospholyase</fullName>
    </alternativeName>
</protein>
<organism>
    <name type="scientific">Pseudomonas syringae pv. syringae (strain B728a)</name>
    <dbReference type="NCBI Taxonomy" id="205918"/>
    <lineage>
        <taxon>Bacteria</taxon>
        <taxon>Pseudomonadati</taxon>
        <taxon>Pseudomonadota</taxon>
        <taxon>Gammaproteobacteria</taxon>
        <taxon>Pseudomonadales</taxon>
        <taxon>Pseudomonadaceae</taxon>
        <taxon>Pseudomonas</taxon>
        <taxon>Pseudomonas syringae</taxon>
    </lineage>
</organism>
<accession>Q4ZVC2</accession>
<comment type="function">
    <text evidence="1">Catalyzes the anti-1,4-elimination of the C-3 phosphate and the C-6 proR hydrogen from 5-enolpyruvylshikimate-3-phosphate (EPSP) to yield chorismate, which is the branch point compound that serves as the starting substrate for the three terminal pathways of aromatic amino acid biosynthesis. This reaction introduces a second double bond into the aromatic ring system.</text>
</comment>
<comment type="catalytic activity">
    <reaction evidence="1">
        <text>5-O-(1-carboxyvinyl)-3-phosphoshikimate = chorismate + phosphate</text>
        <dbReference type="Rhea" id="RHEA:21020"/>
        <dbReference type="ChEBI" id="CHEBI:29748"/>
        <dbReference type="ChEBI" id="CHEBI:43474"/>
        <dbReference type="ChEBI" id="CHEBI:57701"/>
        <dbReference type="EC" id="4.2.3.5"/>
    </reaction>
</comment>
<comment type="cofactor">
    <cofactor evidence="1">
        <name>FMNH2</name>
        <dbReference type="ChEBI" id="CHEBI:57618"/>
    </cofactor>
    <text evidence="1">Reduced FMN (FMNH(2)).</text>
</comment>
<comment type="pathway">
    <text evidence="1">Metabolic intermediate biosynthesis; chorismate biosynthesis; chorismate from D-erythrose 4-phosphate and phosphoenolpyruvate: step 7/7.</text>
</comment>
<comment type="subunit">
    <text evidence="1">Homotetramer.</text>
</comment>
<comment type="similarity">
    <text evidence="1">Belongs to the chorismate synthase family.</text>
</comment>
<sequence length="363" mass="38961">MSGNTFGKLFTVTTAGESHGPALVAIVDGCPPGLELDLQDLQRDLDRRKPGTSRHTTQRQEADEVEILSGVFEGKTTGASIGLLIRNTDQKSKDYSAIKDLFRPAHADYTYHHKYGIRDYRGGGRSSARETAMRVAAGAIAKKYLASQGIVIRGYMSQLGPIQIPFKTWDSVEDNAFFCPDPDKVPELEAYMDQLRRDQDSVGAKITVVADGVMPGLGEPIFDRLDAELAHALMSINAVKGVEIGAGFDCVAQRGTEHRDEMTPQGFLSNHAGGILGGISSGQPIIAHLALKPTSSITTPGRSIDVDGNAADVITKGRHDPCVGIRATPIAEAMMAIVLLDHLLRHRGQNADVSVNTPVLGQV</sequence>
<reference key="1">
    <citation type="journal article" date="2005" name="Proc. Natl. Acad. Sci. U.S.A.">
        <title>Comparison of the complete genome sequences of Pseudomonas syringae pv. syringae B728a and pv. tomato DC3000.</title>
        <authorList>
            <person name="Feil H."/>
            <person name="Feil W.S."/>
            <person name="Chain P."/>
            <person name="Larimer F."/>
            <person name="Dibartolo G."/>
            <person name="Copeland A."/>
            <person name="Lykidis A."/>
            <person name="Trong S."/>
            <person name="Nolan M."/>
            <person name="Goltsman E."/>
            <person name="Thiel J."/>
            <person name="Malfatti S."/>
            <person name="Loper J.E."/>
            <person name="Lapidus A."/>
            <person name="Detter J.C."/>
            <person name="Land M."/>
            <person name="Richardson P.M."/>
            <person name="Kyrpides N.C."/>
            <person name="Ivanova N."/>
            <person name="Lindow S.E."/>
        </authorList>
    </citation>
    <scope>NUCLEOTIDE SEQUENCE [LARGE SCALE GENOMIC DNA]</scope>
    <source>
        <strain>B728a</strain>
    </source>
</reference>
<gene>
    <name evidence="1" type="primary">aroC</name>
    <name type="ordered locus">Psyr_1853</name>
</gene>
<proteinExistence type="inferred from homology"/>
<dbReference type="EC" id="4.2.3.5" evidence="1"/>
<dbReference type="EMBL" id="CP000075">
    <property type="protein sequence ID" value="AAY36900.1"/>
    <property type="molecule type" value="Genomic_DNA"/>
</dbReference>
<dbReference type="RefSeq" id="WP_003405788.1">
    <property type="nucleotide sequence ID" value="NC_007005.1"/>
</dbReference>
<dbReference type="RefSeq" id="YP_234938.1">
    <property type="nucleotide sequence ID" value="NC_007005.1"/>
</dbReference>
<dbReference type="SMR" id="Q4ZVC2"/>
<dbReference type="STRING" id="205918.Psyr_1853"/>
<dbReference type="KEGG" id="psb:Psyr_1853"/>
<dbReference type="PATRIC" id="fig|205918.7.peg.1897"/>
<dbReference type="eggNOG" id="COG0082">
    <property type="taxonomic scope" value="Bacteria"/>
</dbReference>
<dbReference type="HOGENOM" id="CLU_034547_0_2_6"/>
<dbReference type="OrthoDB" id="9771806at2"/>
<dbReference type="UniPathway" id="UPA00053">
    <property type="reaction ID" value="UER00090"/>
</dbReference>
<dbReference type="Proteomes" id="UP000000426">
    <property type="component" value="Chromosome"/>
</dbReference>
<dbReference type="GO" id="GO:0005829">
    <property type="term" value="C:cytosol"/>
    <property type="evidence" value="ECO:0007669"/>
    <property type="project" value="TreeGrafter"/>
</dbReference>
<dbReference type="GO" id="GO:0004107">
    <property type="term" value="F:chorismate synthase activity"/>
    <property type="evidence" value="ECO:0007669"/>
    <property type="project" value="UniProtKB-UniRule"/>
</dbReference>
<dbReference type="GO" id="GO:0010181">
    <property type="term" value="F:FMN binding"/>
    <property type="evidence" value="ECO:0007669"/>
    <property type="project" value="TreeGrafter"/>
</dbReference>
<dbReference type="GO" id="GO:0008652">
    <property type="term" value="P:amino acid biosynthetic process"/>
    <property type="evidence" value="ECO:0007669"/>
    <property type="project" value="UniProtKB-KW"/>
</dbReference>
<dbReference type="GO" id="GO:0009073">
    <property type="term" value="P:aromatic amino acid family biosynthetic process"/>
    <property type="evidence" value="ECO:0007669"/>
    <property type="project" value="UniProtKB-KW"/>
</dbReference>
<dbReference type="GO" id="GO:0009423">
    <property type="term" value="P:chorismate biosynthetic process"/>
    <property type="evidence" value="ECO:0007669"/>
    <property type="project" value="UniProtKB-UniRule"/>
</dbReference>
<dbReference type="CDD" id="cd07304">
    <property type="entry name" value="Chorismate_synthase"/>
    <property type="match status" value="1"/>
</dbReference>
<dbReference type="FunFam" id="3.60.150.10:FF:000001">
    <property type="entry name" value="Chorismate synthase"/>
    <property type="match status" value="1"/>
</dbReference>
<dbReference type="Gene3D" id="3.60.150.10">
    <property type="entry name" value="Chorismate synthase AroC"/>
    <property type="match status" value="1"/>
</dbReference>
<dbReference type="HAMAP" id="MF_00300">
    <property type="entry name" value="Chorismate_synth"/>
    <property type="match status" value="1"/>
</dbReference>
<dbReference type="InterPro" id="IPR000453">
    <property type="entry name" value="Chorismate_synth"/>
</dbReference>
<dbReference type="InterPro" id="IPR035904">
    <property type="entry name" value="Chorismate_synth_AroC_sf"/>
</dbReference>
<dbReference type="InterPro" id="IPR020541">
    <property type="entry name" value="Chorismate_synthase_CS"/>
</dbReference>
<dbReference type="NCBIfam" id="TIGR00033">
    <property type="entry name" value="aroC"/>
    <property type="match status" value="1"/>
</dbReference>
<dbReference type="NCBIfam" id="NF003793">
    <property type="entry name" value="PRK05382.1"/>
    <property type="match status" value="1"/>
</dbReference>
<dbReference type="PANTHER" id="PTHR21085">
    <property type="entry name" value="CHORISMATE SYNTHASE"/>
    <property type="match status" value="1"/>
</dbReference>
<dbReference type="PANTHER" id="PTHR21085:SF0">
    <property type="entry name" value="CHORISMATE SYNTHASE"/>
    <property type="match status" value="1"/>
</dbReference>
<dbReference type="Pfam" id="PF01264">
    <property type="entry name" value="Chorismate_synt"/>
    <property type="match status" value="1"/>
</dbReference>
<dbReference type="PIRSF" id="PIRSF001456">
    <property type="entry name" value="Chorismate_synth"/>
    <property type="match status" value="1"/>
</dbReference>
<dbReference type="SUPFAM" id="SSF103263">
    <property type="entry name" value="Chorismate synthase, AroC"/>
    <property type="match status" value="1"/>
</dbReference>
<dbReference type="PROSITE" id="PS00787">
    <property type="entry name" value="CHORISMATE_SYNTHASE_1"/>
    <property type="match status" value="1"/>
</dbReference>
<dbReference type="PROSITE" id="PS00788">
    <property type="entry name" value="CHORISMATE_SYNTHASE_2"/>
    <property type="match status" value="1"/>
</dbReference>
<dbReference type="PROSITE" id="PS00789">
    <property type="entry name" value="CHORISMATE_SYNTHASE_3"/>
    <property type="match status" value="1"/>
</dbReference>
<name>AROC_PSEU2</name>
<feature type="chain" id="PRO_0000256319" description="Chorismate synthase">
    <location>
        <begin position="1"/>
        <end position="363"/>
    </location>
</feature>
<feature type="binding site" evidence="1">
    <location>
        <position position="48"/>
    </location>
    <ligand>
        <name>NADP(+)</name>
        <dbReference type="ChEBI" id="CHEBI:58349"/>
    </ligand>
</feature>
<feature type="binding site" evidence="1">
    <location>
        <position position="54"/>
    </location>
    <ligand>
        <name>NADP(+)</name>
        <dbReference type="ChEBI" id="CHEBI:58349"/>
    </ligand>
</feature>
<feature type="binding site" evidence="1">
    <location>
        <begin position="125"/>
        <end position="127"/>
    </location>
    <ligand>
        <name>FMN</name>
        <dbReference type="ChEBI" id="CHEBI:58210"/>
    </ligand>
</feature>
<feature type="binding site" evidence="1">
    <location>
        <begin position="237"/>
        <end position="238"/>
    </location>
    <ligand>
        <name>FMN</name>
        <dbReference type="ChEBI" id="CHEBI:58210"/>
    </ligand>
</feature>
<feature type="binding site" evidence="1">
    <location>
        <position position="277"/>
    </location>
    <ligand>
        <name>FMN</name>
        <dbReference type="ChEBI" id="CHEBI:58210"/>
    </ligand>
</feature>
<feature type="binding site" evidence="1">
    <location>
        <begin position="292"/>
        <end position="296"/>
    </location>
    <ligand>
        <name>FMN</name>
        <dbReference type="ChEBI" id="CHEBI:58210"/>
    </ligand>
</feature>
<feature type="binding site" evidence="1">
    <location>
        <position position="318"/>
    </location>
    <ligand>
        <name>FMN</name>
        <dbReference type="ChEBI" id="CHEBI:58210"/>
    </ligand>
</feature>
<evidence type="ECO:0000255" key="1">
    <source>
        <dbReference type="HAMAP-Rule" id="MF_00300"/>
    </source>
</evidence>